<dbReference type="EMBL" id="CP001139">
    <property type="protein sequence ID" value="ACH66349.1"/>
    <property type="status" value="ALT_INIT"/>
    <property type="molecule type" value="Genomic_DNA"/>
</dbReference>
<dbReference type="RefSeq" id="WP_011261178.1">
    <property type="nucleotide sequence ID" value="NC_011184.1"/>
</dbReference>
<dbReference type="SMR" id="B5F9M8"/>
<dbReference type="GeneID" id="54163012"/>
<dbReference type="KEGG" id="vfm:VFMJ11_0375"/>
<dbReference type="HOGENOM" id="CLU_059558_1_1_6"/>
<dbReference type="Proteomes" id="UP000001857">
    <property type="component" value="Chromosome I"/>
</dbReference>
<dbReference type="GO" id="GO:0005524">
    <property type="term" value="F:ATP binding"/>
    <property type="evidence" value="ECO:0007669"/>
    <property type="project" value="UniProtKB-UniRule"/>
</dbReference>
<dbReference type="GO" id="GO:0005525">
    <property type="term" value="F:GTP binding"/>
    <property type="evidence" value="ECO:0007669"/>
    <property type="project" value="UniProtKB-UniRule"/>
</dbReference>
<dbReference type="Gene3D" id="3.40.50.300">
    <property type="entry name" value="P-loop containing nucleotide triphosphate hydrolases"/>
    <property type="match status" value="1"/>
</dbReference>
<dbReference type="HAMAP" id="MF_00636">
    <property type="entry name" value="RapZ_like"/>
    <property type="match status" value="1"/>
</dbReference>
<dbReference type="InterPro" id="IPR027417">
    <property type="entry name" value="P-loop_NTPase"/>
</dbReference>
<dbReference type="InterPro" id="IPR005337">
    <property type="entry name" value="RapZ-like"/>
</dbReference>
<dbReference type="InterPro" id="IPR053930">
    <property type="entry name" value="RapZ-like_N"/>
</dbReference>
<dbReference type="InterPro" id="IPR053931">
    <property type="entry name" value="RapZ_C"/>
</dbReference>
<dbReference type="NCBIfam" id="NF003828">
    <property type="entry name" value="PRK05416.1"/>
    <property type="match status" value="1"/>
</dbReference>
<dbReference type="PANTHER" id="PTHR30448">
    <property type="entry name" value="RNASE ADAPTER PROTEIN RAPZ"/>
    <property type="match status" value="1"/>
</dbReference>
<dbReference type="PANTHER" id="PTHR30448:SF0">
    <property type="entry name" value="RNASE ADAPTER PROTEIN RAPZ"/>
    <property type="match status" value="1"/>
</dbReference>
<dbReference type="Pfam" id="PF22740">
    <property type="entry name" value="PapZ_C"/>
    <property type="match status" value="1"/>
</dbReference>
<dbReference type="Pfam" id="PF03668">
    <property type="entry name" value="RapZ-like_N"/>
    <property type="match status" value="1"/>
</dbReference>
<dbReference type="PIRSF" id="PIRSF005052">
    <property type="entry name" value="P-loopkin"/>
    <property type="match status" value="1"/>
</dbReference>
<dbReference type="SUPFAM" id="SSF52540">
    <property type="entry name" value="P-loop containing nucleoside triphosphate hydrolases"/>
    <property type="match status" value="1"/>
</dbReference>
<gene>
    <name type="ordered locus">VFMJ11_0375</name>
</gene>
<proteinExistence type="inferred from homology"/>
<keyword id="KW-0067">ATP-binding</keyword>
<keyword id="KW-0342">GTP-binding</keyword>
<keyword id="KW-0547">Nucleotide-binding</keyword>
<comment type="function">
    <text evidence="1">Displays ATPase and GTPase activities.</text>
</comment>
<comment type="similarity">
    <text evidence="1">Belongs to the RapZ-like family.</text>
</comment>
<comment type="sequence caution" evidence="2">
    <conflict type="erroneous initiation">
        <sequence resource="EMBL-CDS" id="ACH66349"/>
    </conflict>
</comment>
<name>Y375_ALIFM</name>
<feature type="chain" id="PRO_0000383304" description="Nucleotide-binding protein VFMJ11_0375">
    <location>
        <begin position="1"/>
        <end position="284"/>
    </location>
</feature>
<feature type="binding site" evidence="1">
    <location>
        <begin position="8"/>
        <end position="15"/>
    </location>
    <ligand>
        <name>ATP</name>
        <dbReference type="ChEBI" id="CHEBI:30616"/>
    </ligand>
</feature>
<feature type="binding site" evidence="1">
    <location>
        <begin position="56"/>
        <end position="59"/>
    </location>
    <ligand>
        <name>GTP</name>
        <dbReference type="ChEBI" id="CHEBI:37565"/>
    </ligand>
</feature>
<protein>
    <recommendedName>
        <fullName evidence="1">Nucleotide-binding protein VFMJ11_0375</fullName>
    </recommendedName>
</protein>
<organism>
    <name type="scientific">Aliivibrio fischeri (strain MJ11)</name>
    <name type="common">Vibrio fischeri</name>
    <dbReference type="NCBI Taxonomy" id="388396"/>
    <lineage>
        <taxon>Bacteria</taxon>
        <taxon>Pseudomonadati</taxon>
        <taxon>Pseudomonadota</taxon>
        <taxon>Gammaproteobacteria</taxon>
        <taxon>Vibrionales</taxon>
        <taxon>Vibrionaceae</taxon>
        <taxon>Aliivibrio</taxon>
    </lineage>
</organism>
<reference key="1">
    <citation type="submission" date="2008-08" db="EMBL/GenBank/DDBJ databases">
        <title>Complete sequence of Vibrio fischeri strain MJ11.</title>
        <authorList>
            <person name="Mandel M.J."/>
            <person name="Stabb E.V."/>
            <person name="Ruby E.G."/>
            <person name="Ferriera S."/>
            <person name="Johnson J."/>
            <person name="Kravitz S."/>
            <person name="Beeson K."/>
            <person name="Sutton G."/>
            <person name="Rogers Y.-H."/>
            <person name="Friedman R."/>
            <person name="Frazier M."/>
            <person name="Venter J.C."/>
        </authorList>
    </citation>
    <scope>NUCLEOTIDE SEQUENCE [LARGE SCALE GENOMIC DNA]</scope>
    <source>
        <strain>MJ11</strain>
    </source>
</reference>
<evidence type="ECO:0000255" key="1">
    <source>
        <dbReference type="HAMAP-Rule" id="MF_00636"/>
    </source>
</evidence>
<evidence type="ECO:0000305" key="2"/>
<accession>B5F9M8</accession>
<sequence length="284" mass="32274">MKLMVVSGSSGAGKSVALRVLEDLGYYCVDNLPIDLLTQFVESIQHSSQNVAVSVDIRNLPKDPALLKNTLALLKKTHDVTVIFLDAEDKELIKRYSETRRLHPLSLIGEQCSLEQAVTLEKSILSDYREEADLVLDTTTKSIHDLSETLRSRILGRESKELVMVFESFGFKHGLPTDADYVFDVRFLPNPHWEPSLRPMTGLDKPVADYLAKHTEVIQLKEQIQQFLTTWLPALEKNNRSYLTVAIGCTGGQHRSVYITQQLGEYFKQQGKQVQIRHKTLERH</sequence>